<feature type="chain" id="PRO_0000194966" description="SUMO-activating enzyme subunit 1">
    <location>
        <begin position="1"/>
        <end position="346"/>
    </location>
</feature>
<feature type="initiator methionine" description="Removed; alternate" evidence="8 13">
    <location>
        <position position="1"/>
    </location>
</feature>
<feature type="chain" id="PRO_0000423290" description="SUMO-activating enzyme subunit 1, N-terminally processed">
    <location>
        <begin position="2"/>
        <end position="346"/>
    </location>
</feature>
<feature type="modified residue" description="N-acetylmethionine" evidence="13 14">
    <location>
        <position position="1"/>
    </location>
</feature>
<feature type="modified residue" description="N-acetylvaline; in SUMO-activating enzyme subunit 1, N-terminally processed" evidence="8 13">
    <location>
        <position position="2"/>
    </location>
</feature>
<feature type="modified residue" description="Phosphoserine" evidence="15">
    <location>
        <position position="12"/>
    </location>
</feature>
<feature type="modified residue" description="N6-acetyllysine" evidence="1">
    <location>
        <position position="198"/>
    </location>
</feature>
<feature type="splice variant" id="VSP_045372" description="In isoform 3." evidence="10">
    <original>VLLKFRTDKGRDPSSDTYEEDSELLLQIRNDVLDSLGISPDLLPEDFVRYCFSEM</original>
    <variation>GPVSAGPSSQQLLLLRWHEGEWDCGVPWPQVNSRFGSPRDANCSMPTCIPCPLPS</variation>
    <location>
        <begin position="245"/>
        <end position="299"/>
    </location>
</feature>
<feature type="splice variant" id="VSP_045373" description="In isoform 2." evidence="11">
    <original>VLLKFRTDKGRDPSSDTYEEDS</original>
    <variation>GTASPRWPQCVRWLEGFWHRKL</variation>
    <location>
        <begin position="245"/>
        <end position="266"/>
    </location>
</feature>
<feature type="splice variant" id="VSP_045374" description="In isoform 2." evidence="11">
    <location>
        <begin position="267"/>
        <end position="346"/>
    </location>
</feature>
<feature type="splice variant" id="VSP_045375" description="In isoform 3." evidence="10">
    <location>
        <begin position="300"/>
        <end position="346"/>
    </location>
</feature>
<feature type="mutagenesis site" description="Abolishes ATP-dependent activation of SUMO proteins." evidence="7">
    <original>R</original>
    <variation>A</variation>
    <location>
        <position position="21"/>
    </location>
</feature>
<feature type="mutagenesis site" description="Abolishes ATP-dependent activation of SUMO proteins." evidence="7">
    <original>RLW</original>
    <variation>AAA</variation>
    <location>
        <begin position="24"/>
        <end position="26"/>
    </location>
</feature>
<feature type="sequence conflict" description="In Ref. 6; BAG51064." evidence="12" ref="6">
    <original>I</original>
    <variation>M</variation>
    <location>
        <position position="115"/>
    </location>
</feature>
<feature type="sequence conflict" description="In Ref. 4; AAF29104." evidence="12" ref="4">
    <original>V</original>
    <variation>A</variation>
    <location>
        <position position="158"/>
    </location>
</feature>
<feature type="sequence conflict" description="In Ref. 4; AAF29104." evidence="12" ref="4">
    <original>KTK</original>
    <variation>ETD</variation>
    <location>
        <begin position="178"/>
        <end position="180"/>
    </location>
</feature>
<feature type="sequence conflict" description="In Ref. 4; AAF29104." evidence="12" ref="4">
    <original>Q</original>
    <variation>H</variation>
    <location>
        <position position="186"/>
    </location>
</feature>
<feature type="sequence conflict" description="In Ref. 1; AAD12785." evidence="12" ref="1">
    <original>R</original>
    <variation>G</variation>
    <location>
        <position position="273"/>
    </location>
</feature>
<feature type="helix" evidence="19">
    <location>
        <begin position="13"/>
        <end position="18"/>
    </location>
</feature>
<feature type="helix" evidence="19">
    <location>
        <begin position="20"/>
        <end position="26"/>
    </location>
</feature>
<feature type="helix" evidence="19">
    <location>
        <begin position="28"/>
        <end position="35"/>
    </location>
</feature>
<feature type="strand" evidence="19">
    <location>
        <begin position="38"/>
        <end position="42"/>
    </location>
</feature>
<feature type="helix" evidence="19">
    <location>
        <begin position="46"/>
        <end position="58"/>
    </location>
</feature>
<feature type="strand" evidence="19">
    <location>
        <begin position="61"/>
        <end position="66"/>
    </location>
</feature>
<feature type="strand" evidence="17">
    <location>
        <begin position="73"/>
        <end position="75"/>
    </location>
</feature>
<feature type="helix" evidence="16">
    <location>
        <begin position="76"/>
        <end position="78"/>
    </location>
</feature>
<feature type="strand" evidence="18">
    <location>
        <begin position="80"/>
        <end position="82"/>
    </location>
</feature>
<feature type="helix" evidence="19">
    <location>
        <begin position="91"/>
        <end position="101"/>
    </location>
</feature>
<feature type="strand" evidence="19">
    <location>
        <begin position="106"/>
        <end position="111"/>
    </location>
</feature>
<feature type="helix" evidence="19">
    <location>
        <begin position="115"/>
        <end position="117"/>
    </location>
</feature>
<feature type="helix" evidence="19">
    <location>
        <begin position="120"/>
        <end position="125"/>
    </location>
</feature>
<feature type="strand" evidence="19">
    <location>
        <begin position="127"/>
        <end position="133"/>
    </location>
</feature>
<feature type="helix" evidence="19">
    <location>
        <begin position="136"/>
        <end position="148"/>
    </location>
</feature>
<feature type="strand" evidence="19">
    <location>
        <begin position="152"/>
        <end position="160"/>
    </location>
</feature>
<feature type="strand" evidence="19">
    <location>
        <begin position="162"/>
        <end position="168"/>
    </location>
</feature>
<feature type="strand" evidence="19">
    <location>
        <begin position="170"/>
        <end position="177"/>
    </location>
</feature>
<feature type="strand" evidence="19">
    <location>
        <begin position="206"/>
        <end position="212"/>
    </location>
</feature>
<feature type="helix" evidence="19">
    <location>
        <begin position="216"/>
        <end position="220"/>
    </location>
</feature>
<feature type="helix" evidence="19">
    <location>
        <begin position="227"/>
        <end position="234"/>
    </location>
</feature>
<feature type="helix" evidence="19">
    <location>
        <begin position="239"/>
        <end position="253"/>
    </location>
</feature>
<feature type="helix" evidence="19">
    <location>
        <begin position="259"/>
        <end position="261"/>
    </location>
</feature>
<feature type="helix" evidence="19">
    <location>
        <begin position="262"/>
        <end position="278"/>
    </location>
</feature>
<feature type="turn" evidence="19">
    <location>
        <begin position="279"/>
        <end position="281"/>
    </location>
</feature>
<feature type="helix" evidence="19">
    <location>
        <begin position="284"/>
        <end position="286"/>
    </location>
</feature>
<feature type="helix" evidence="19">
    <location>
        <begin position="289"/>
        <end position="294"/>
    </location>
</feature>
<feature type="strand" evidence="17">
    <location>
        <begin position="296"/>
        <end position="298"/>
    </location>
</feature>
<feature type="helix" evidence="19">
    <location>
        <begin position="300"/>
        <end position="319"/>
    </location>
</feature>
<feature type="strand" evidence="19">
    <location>
        <begin position="327"/>
        <end position="332"/>
    </location>
</feature>
<feature type="turn" evidence="19">
    <location>
        <begin position="333"/>
        <end position="336"/>
    </location>
</feature>
<feature type="strand" evidence="19">
    <location>
        <begin position="337"/>
        <end position="341"/>
    </location>
</feature>
<evidence type="ECO:0000250" key="1">
    <source>
        <dbReference type="UniProtKB" id="Q9R1T2"/>
    </source>
</evidence>
<evidence type="ECO:0000269" key="2">
    <source>
    </source>
</evidence>
<evidence type="ECO:0000269" key="3">
    <source>
    </source>
</evidence>
<evidence type="ECO:0000269" key="4">
    <source>
    </source>
</evidence>
<evidence type="ECO:0000269" key="5">
    <source>
    </source>
</evidence>
<evidence type="ECO:0000269" key="6">
    <source>
    </source>
</evidence>
<evidence type="ECO:0000269" key="7">
    <source>
    </source>
</evidence>
<evidence type="ECO:0000269" key="8">
    <source>
    </source>
</evidence>
<evidence type="ECO:0000269" key="9">
    <source>
    </source>
</evidence>
<evidence type="ECO:0000303" key="10">
    <source>
    </source>
</evidence>
<evidence type="ECO:0000303" key="11">
    <source ref="5"/>
</evidence>
<evidence type="ECO:0000305" key="12"/>
<evidence type="ECO:0007744" key="13">
    <source>
    </source>
</evidence>
<evidence type="ECO:0007744" key="14">
    <source>
    </source>
</evidence>
<evidence type="ECO:0007744" key="15">
    <source>
    </source>
</evidence>
<evidence type="ECO:0007829" key="16">
    <source>
        <dbReference type="PDB" id="1Y8Q"/>
    </source>
</evidence>
<evidence type="ECO:0007829" key="17">
    <source>
        <dbReference type="PDB" id="3KYC"/>
    </source>
</evidence>
<evidence type="ECO:0007829" key="18">
    <source>
        <dbReference type="PDB" id="6CWY"/>
    </source>
</evidence>
<evidence type="ECO:0007829" key="19">
    <source>
        <dbReference type="PDB" id="6XOG"/>
    </source>
</evidence>
<accession>Q9UBE0</accession>
<accession>B2RDP5</accession>
<accession>B3KMQ2</accession>
<accession>F5GXX7</accession>
<accession>G3XAK6</accession>
<accession>O95717</accession>
<accession>Q9P020</accession>
<sequence length="346" mass="38450">MVEKEEAGGGISEEEAAQYDRQIRLWGLEAQKRLRASRVLLVGLKGLGAEIAKNLILAGVKGLTMLDHEQVTPEDPGAQFLIRTGSVGRNRAEASLERAQNLNPMVDVKVDTEDIEKKPESFFTQFDAVCLTCCSRDVIVKVDQICHKNSIKFFTGDVFGYHGYTFANLGEHEFVEEKTKVAKVSQGVEDGPDTKRAKLDSSETTMVKKKVVFCPVKEALEVDWSSEKAKAALKRTTSDYFLLQVLLKFRTDKGRDPSSDTYEEDSELLLQIRNDVLDSLGISPDLLPEDFVRYCFSEMAPVCAVVGGILAQEIVKALSQRDPPHNNFFFFDGMKGNGIVECLGPK</sequence>
<organism>
    <name type="scientific">Homo sapiens</name>
    <name type="common">Human</name>
    <dbReference type="NCBI Taxonomy" id="9606"/>
    <lineage>
        <taxon>Eukaryota</taxon>
        <taxon>Metazoa</taxon>
        <taxon>Chordata</taxon>
        <taxon>Craniata</taxon>
        <taxon>Vertebrata</taxon>
        <taxon>Euteleostomi</taxon>
        <taxon>Mammalia</taxon>
        <taxon>Eutheria</taxon>
        <taxon>Euarchontoglires</taxon>
        <taxon>Primates</taxon>
        <taxon>Haplorrhini</taxon>
        <taxon>Catarrhini</taxon>
        <taxon>Hominidae</taxon>
        <taxon>Homo</taxon>
    </lineage>
</organism>
<proteinExistence type="evidence at protein level"/>
<name>SAE1_HUMAN</name>
<reference key="1">
    <citation type="journal article" date="1999" name="Biochem. Biophys. Res. Commun.">
        <title>In vitro SUMO-1 modification requires two enzymatic steps, E1 and E2.</title>
        <authorList>
            <person name="Okuma T."/>
            <person name="Honda R."/>
            <person name="Ichikawa G."/>
            <person name="Tsumagari N."/>
            <person name="Yasuda H."/>
        </authorList>
    </citation>
    <scope>NUCLEOTIDE SEQUENCE [MRNA] (ISOFORM 1)</scope>
    <scope>DIMERIZATION</scope>
    <scope>FUNCTION</scope>
    <source>
        <tissue>Cervix carcinoma</tissue>
    </source>
</reference>
<reference key="2">
    <citation type="journal article" date="1999" name="FEBS Lett.">
        <title>Molecular cloning and characterization of human AOS1 and UBA2, components of the sentrin-activating enzyme complex.</title>
        <authorList>
            <person name="Gong L."/>
            <person name="Li B."/>
            <person name="Millas S."/>
            <person name="Yeh E.T.H."/>
        </authorList>
    </citation>
    <scope>NUCLEOTIDE SEQUENCE [MRNA] (ISOFORM 1)</scope>
    <scope>DIMERIZATION</scope>
    <scope>FUNCTION</scope>
    <source>
        <tissue>Placenta</tissue>
    </source>
</reference>
<reference key="3">
    <citation type="journal article" date="1999" name="J. Biol. Chem.">
        <title>Identification of the enzyme required for activation of the small ubiquitin-like protein SUMO-1.</title>
        <authorList>
            <person name="Desterro J.M.P."/>
            <person name="Rodriguez M.S."/>
            <person name="Kemp G.D."/>
            <person name="Hay R.T."/>
        </authorList>
    </citation>
    <scope>NUCLEOTIDE SEQUENCE [MRNA] (ISOFORM 1)</scope>
    <scope>PROTEIN SEQUENCE OF 1-11; 109-117 AND 186-193</scope>
    <scope>DIMERIZATION</scope>
    <scope>FUNCTION</scope>
    <source>
        <tissue>Cervix carcinoma</tissue>
    </source>
</reference>
<reference key="4">
    <citation type="journal article" date="2000" name="Genome Res.">
        <title>Cloning and functional analysis of cDNAs with open reading frames for 300 previously undefined genes expressed in CD34+ hematopoietic stem/progenitor cells.</title>
        <authorList>
            <person name="Zhang Q.-H."/>
            <person name="Ye M."/>
            <person name="Wu X.-Y."/>
            <person name="Ren S.-X."/>
            <person name="Zhao M."/>
            <person name="Zhao C.-J."/>
            <person name="Fu G."/>
            <person name="Shen Y."/>
            <person name="Fan H.-Y."/>
            <person name="Lu G."/>
            <person name="Zhong M."/>
            <person name="Xu X.-R."/>
            <person name="Han Z.-G."/>
            <person name="Zhang J.-W."/>
            <person name="Tao J."/>
            <person name="Huang Q.-H."/>
            <person name="Zhou J."/>
            <person name="Hu G.-X."/>
            <person name="Gu J."/>
            <person name="Chen S.-J."/>
            <person name="Chen Z."/>
        </authorList>
    </citation>
    <scope>NUCLEOTIDE SEQUENCE [LARGE SCALE MRNA] (ISOFORM 1)</scope>
    <source>
        <tissue>Umbilical cord blood</tissue>
    </source>
</reference>
<reference key="5">
    <citation type="submission" date="2003-04" db="EMBL/GenBank/DDBJ databases">
        <title>Full-length cDNA libraries and normalization.</title>
        <authorList>
            <person name="Li W.B."/>
            <person name="Gruber C."/>
            <person name="Jessee J."/>
            <person name="Polayes D."/>
        </authorList>
    </citation>
    <scope>NUCLEOTIDE SEQUENCE [LARGE SCALE MRNA] (ISOFORM 2)</scope>
    <source>
        <tissue>B-cell</tissue>
    </source>
</reference>
<reference key="6">
    <citation type="submission" date="2003-05" db="EMBL/GenBank/DDBJ databases">
        <title>Cloning of human full-length CDSs in BD Creator(TM) system donor vector.</title>
        <authorList>
            <person name="Kalnine N."/>
            <person name="Chen X."/>
            <person name="Rolfs A."/>
            <person name="Halleck A."/>
            <person name="Hines L."/>
            <person name="Eisenstein S."/>
            <person name="Koundinya M."/>
            <person name="Raphael J."/>
            <person name="Moreira D."/>
            <person name="Kelley T."/>
            <person name="LaBaer J."/>
            <person name="Lin Y."/>
            <person name="Phelan M."/>
            <person name="Farmer A."/>
        </authorList>
    </citation>
    <scope>NUCLEOTIDE SEQUENCE [LARGE SCALE MRNA] (ISOFORM 1)</scope>
</reference>
<reference key="7">
    <citation type="journal article" date="2004" name="Nat. Genet.">
        <title>Complete sequencing and characterization of 21,243 full-length human cDNAs.</title>
        <authorList>
            <person name="Ota T."/>
            <person name="Suzuki Y."/>
            <person name="Nishikawa T."/>
            <person name="Otsuki T."/>
            <person name="Sugiyama T."/>
            <person name="Irie R."/>
            <person name="Wakamatsu A."/>
            <person name="Hayashi K."/>
            <person name="Sato H."/>
            <person name="Nagai K."/>
            <person name="Kimura K."/>
            <person name="Makita H."/>
            <person name="Sekine M."/>
            <person name="Obayashi M."/>
            <person name="Nishi T."/>
            <person name="Shibahara T."/>
            <person name="Tanaka T."/>
            <person name="Ishii S."/>
            <person name="Yamamoto J."/>
            <person name="Saito K."/>
            <person name="Kawai Y."/>
            <person name="Isono Y."/>
            <person name="Nakamura Y."/>
            <person name="Nagahari K."/>
            <person name="Murakami K."/>
            <person name="Yasuda T."/>
            <person name="Iwayanagi T."/>
            <person name="Wagatsuma M."/>
            <person name="Shiratori A."/>
            <person name="Sudo H."/>
            <person name="Hosoiri T."/>
            <person name="Kaku Y."/>
            <person name="Kodaira H."/>
            <person name="Kondo H."/>
            <person name="Sugawara M."/>
            <person name="Takahashi M."/>
            <person name="Kanda K."/>
            <person name="Yokoi T."/>
            <person name="Furuya T."/>
            <person name="Kikkawa E."/>
            <person name="Omura Y."/>
            <person name="Abe K."/>
            <person name="Kamihara K."/>
            <person name="Katsuta N."/>
            <person name="Sato K."/>
            <person name="Tanikawa M."/>
            <person name="Yamazaki M."/>
            <person name="Ninomiya K."/>
            <person name="Ishibashi T."/>
            <person name="Yamashita H."/>
            <person name="Murakawa K."/>
            <person name="Fujimori K."/>
            <person name="Tanai H."/>
            <person name="Kimata M."/>
            <person name="Watanabe M."/>
            <person name="Hiraoka S."/>
            <person name="Chiba Y."/>
            <person name="Ishida S."/>
            <person name="Ono Y."/>
            <person name="Takiguchi S."/>
            <person name="Watanabe S."/>
            <person name="Yosida M."/>
            <person name="Hotuta T."/>
            <person name="Kusano J."/>
            <person name="Kanehori K."/>
            <person name="Takahashi-Fujii A."/>
            <person name="Hara H."/>
            <person name="Tanase T.-O."/>
            <person name="Nomura Y."/>
            <person name="Togiya S."/>
            <person name="Komai F."/>
            <person name="Hara R."/>
            <person name="Takeuchi K."/>
            <person name="Arita M."/>
            <person name="Imose N."/>
            <person name="Musashino K."/>
            <person name="Yuuki H."/>
            <person name="Oshima A."/>
            <person name="Sasaki N."/>
            <person name="Aotsuka S."/>
            <person name="Yoshikawa Y."/>
            <person name="Matsunawa H."/>
            <person name="Ichihara T."/>
            <person name="Shiohata N."/>
            <person name="Sano S."/>
            <person name="Moriya S."/>
            <person name="Momiyama H."/>
            <person name="Satoh N."/>
            <person name="Takami S."/>
            <person name="Terashima Y."/>
            <person name="Suzuki O."/>
            <person name="Nakagawa S."/>
            <person name="Senoh A."/>
            <person name="Mizoguchi H."/>
            <person name="Goto Y."/>
            <person name="Shimizu F."/>
            <person name="Wakebe H."/>
            <person name="Hishigaki H."/>
            <person name="Watanabe T."/>
            <person name="Sugiyama A."/>
            <person name="Takemoto M."/>
            <person name="Kawakami B."/>
            <person name="Yamazaki M."/>
            <person name="Watanabe K."/>
            <person name="Kumagai A."/>
            <person name="Itakura S."/>
            <person name="Fukuzumi Y."/>
            <person name="Fujimori Y."/>
            <person name="Komiyama M."/>
            <person name="Tashiro H."/>
            <person name="Tanigami A."/>
            <person name="Fujiwara T."/>
            <person name="Ono T."/>
            <person name="Yamada K."/>
            <person name="Fujii Y."/>
            <person name="Ozaki K."/>
            <person name="Hirao M."/>
            <person name="Ohmori Y."/>
            <person name="Kawabata A."/>
            <person name="Hikiji T."/>
            <person name="Kobatake N."/>
            <person name="Inagaki H."/>
            <person name="Ikema Y."/>
            <person name="Okamoto S."/>
            <person name="Okitani R."/>
            <person name="Kawakami T."/>
            <person name="Noguchi S."/>
            <person name="Itoh T."/>
            <person name="Shigeta K."/>
            <person name="Senba T."/>
            <person name="Matsumura K."/>
            <person name="Nakajima Y."/>
            <person name="Mizuno T."/>
            <person name="Morinaga M."/>
            <person name="Sasaki M."/>
            <person name="Togashi T."/>
            <person name="Oyama M."/>
            <person name="Hata H."/>
            <person name="Watanabe M."/>
            <person name="Komatsu T."/>
            <person name="Mizushima-Sugano J."/>
            <person name="Satoh T."/>
            <person name="Shirai Y."/>
            <person name="Takahashi Y."/>
            <person name="Nakagawa K."/>
            <person name="Okumura K."/>
            <person name="Nagase T."/>
            <person name="Nomura N."/>
            <person name="Kikuchi H."/>
            <person name="Masuho Y."/>
            <person name="Yamashita R."/>
            <person name="Nakai K."/>
            <person name="Yada T."/>
            <person name="Nakamura Y."/>
            <person name="Ohara O."/>
            <person name="Isogai T."/>
            <person name="Sugano S."/>
        </authorList>
    </citation>
    <scope>NUCLEOTIDE SEQUENCE [LARGE SCALE MRNA] (ISOFORMS 1 AND 3)</scope>
</reference>
<reference key="8">
    <citation type="journal article" date="2004" name="Nature">
        <title>The DNA sequence and biology of human chromosome 19.</title>
        <authorList>
            <person name="Grimwood J."/>
            <person name="Gordon L.A."/>
            <person name="Olsen A.S."/>
            <person name="Terry A."/>
            <person name="Schmutz J."/>
            <person name="Lamerdin J.E."/>
            <person name="Hellsten U."/>
            <person name="Goodstein D."/>
            <person name="Couronne O."/>
            <person name="Tran-Gyamfi M."/>
            <person name="Aerts A."/>
            <person name="Altherr M."/>
            <person name="Ashworth L."/>
            <person name="Bajorek E."/>
            <person name="Black S."/>
            <person name="Branscomb E."/>
            <person name="Caenepeel S."/>
            <person name="Carrano A.V."/>
            <person name="Caoile C."/>
            <person name="Chan Y.M."/>
            <person name="Christensen M."/>
            <person name="Cleland C.A."/>
            <person name="Copeland A."/>
            <person name="Dalin E."/>
            <person name="Dehal P."/>
            <person name="Denys M."/>
            <person name="Detter J.C."/>
            <person name="Escobar J."/>
            <person name="Flowers D."/>
            <person name="Fotopulos D."/>
            <person name="Garcia C."/>
            <person name="Georgescu A.M."/>
            <person name="Glavina T."/>
            <person name="Gomez M."/>
            <person name="Gonzales E."/>
            <person name="Groza M."/>
            <person name="Hammon N."/>
            <person name="Hawkins T."/>
            <person name="Haydu L."/>
            <person name="Ho I."/>
            <person name="Huang W."/>
            <person name="Israni S."/>
            <person name="Jett J."/>
            <person name="Kadner K."/>
            <person name="Kimball H."/>
            <person name="Kobayashi A."/>
            <person name="Larionov V."/>
            <person name="Leem S.-H."/>
            <person name="Lopez F."/>
            <person name="Lou Y."/>
            <person name="Lowry S."/>
            <person name="Malfatti S."/>
            <person name="Martinez D."/>
            <person name="McCready P.M."/>
            <person name="Medina C."/>
            <person name="Morgan J."/>
            <person name="Nelson K."/>
            <person name="Nolan M."/>
            <person name="Ovcharenko I."/>
            <person name="Pitluck S."/>
            <person name="Pollard M."/>
            <person name="Popkie A.P."/>
            <person name="Predki P."/>
            <person name="Quan G."/>
            <person name="Ramirez L."/>
            <person name="Rash S."/>
            <person name="Retterer J."/>
            <person name="Rodriguez A."/>
            <person name="Rogers S."/>
            <person name="Salamov A."/>
            <person name="Salazar A."/>
            <person name="She X."/>
            <person name="Smith D."/>
            <person name="Slezak T."/>
            <person name="Solovyev V."/>
            <person name="Thayer N."/>
            <person name="Tice H."/>
            <person name="Tsai M."/>
            <person name="Ustaszewska A."/>
            <person name="Vo N."/>
            <person name="Wagner M."/>
            <person name="Wheeler J."/>
            <person name="Wu K."/>
            <person name="Xie G."/>
            <person name="Yang J."/>
            <person name="Dubchak I."/>
            <person name="Furey T.S."/>
            <person name="DeJong P."/>
            <person name="Dickson M."/>
            <person name="Gordon D."/>
            <person name="Eichler E.E."/>
            <person name="Pennacchio L.A."/>
            <person name="Richardson P."/>
            <person name="Stubbs L."/>
            <person name="Rokhsar D.S."/>
            <person name="Myers R.M."/>
            <person name="Rubin E.M."/>
            <person name="Lucas S.M."/>
        </authorList>
    </citation>
    <scope>NUCLEOTIDE SEQUENCE [LARGE SCALE GENOMIC DNA]</scope>
</reference>
<reference key="9">
    <citation type="submission" date="2005-07" db="EMBL/GenBank/DDBJ databases">
        <authorList>
            <person name="Mural R.J."/>
            <person name="Istrail S."/>
            <person name="Sutton G.G."/>
            <person name="Florea L."/>
            <person name="Halpern A.L."/>
            <person name="Mobarry C.M."/>
            <person name="Lippert R."/>
            <person name="Walenz B."/>
            <person name="Shatkay H."/>
            <person name="Dew I."/>
            <person name="Miller J.R."/>
            <person name="Flanigan M.J."/>
            <person name="Edwards N.J."/>
            <person name="Bolanos R."/>
            <person name="Fasulo D."/>
            <person name="Halldorsson B.V."/>
            <person name="Hannenhalli S."/>
            <person name="Turner R."/>
            <person name="Yooseph S."/>
            <person name="Lu F."/>
            <person name="Nusskern D.R."/>
            <person name="Shue B.C."/>
            <person name="Zheng X.H."/>
            <person name="Zhong F."/>
            <person name="Delcher A.L."/>
            <person name="Huson D.H."/>
            <person name="Kravitz S.A."/>
            <person name="Mouchard L."/>
            <person name="Reinert K."/>
            <person name="Remington K.A."/>
            <person name="Clark A.G."/>
            <person name="Waterman M.S."/>
            <person name="Eichler E.E."/>
            <person name="Adams M.D."/>
            <person name="Hunkapiller M.W."/>
            <person name="Myers E.W."/>
            <person name="Venter J.C."/>
        </authorList>
    </citation>
    <scope>NUCLEOTIDE SEQUENCE [LARGE SCALE GENOMIC DNA]</scope>
</reference>
<reference key="10">
    <citation type="journal article" date="2004" name="Genome Res.">
        <title>The status, quality, and expansion of the NIH full-length cDNA project: the Mammalian Gene Collection (MGC).</title>
        <authorList>
            <consortium name="The MGC Project Team"/>
        </authorList>
    </citation>
    <scope>NUCLEOTIDE SEQUENCE [LARGE SCALE MRNA] (ISOFORM 1)</scope>
    <source>
        <tissue>Colon</tissue>
        <tissue>Lung</tissue>
        <tissue>Placenta</tissue>
    </source>
</reference>
<reference key="11">
    <citation type="journal article" date="2001" name="FASEB J.">
        <title>Expression and regulation of the mammalian SUMO-1 E1 enzyme.</title>
        <authorList>
            <person name="Azuma Y."/>
            <person name="Tan S.-H."/>
            <person name="Cavenagh M.M."/>
            <person name="Ainsztein A.M."/>
            <person name="Saitoh H."/>
            <person name="Dasso M."/>
        </authorList>
    </citation>
    <scope>SUBCELLULAR LOCATION</scope>
    <scope>TISSUE SPECIFICITY</scope>
    <scope>DIMERIZATION</scope>
    <scope>FUNCTION</scope>
</reference>
<reference key="12">
    <citation type="journal article" date="2001" name="J. Biol. Chem.">
        <title>Polymeric chains of SUMO-2 and SUMO-3 are conjugated to protein substrates by SAE1/SAE2 and Ubc9.</title>
        <authorList>
            <person name="Tatham M.H."/>
            <person name="Jaffray E."/>
            <person name="Vaughan O.A."/>
            <person name="Desterro J.M.P."/>
            <person name="Botting C.H."/>
            <person name="Naismith J.H."/>
            <person name="Hay R.T."/>
        </authorList>
    </citation>
    <scope>FUNCTION</scope>
</reference>
<reference key="13">
    <citation type="journal article" date="2006" name="Arch. Biochem. Biophys.">
        <title>A general approach for investigating enzymatic pathways and substrates for ubiquitin-like modifiers.</title>
        <authorList>
            <person name="Li T."/>
            <person name="Santockyte R."/>
            <person name="Shen R.-F."/>
            <person name="Tekle E."/>
            <person name="Wang G."/>
            <person name="Yang D.C.H."/>
            <person name="Chock P.B."/>
        </authorList>
    </citation>
    <scope>IDENTIFICATION BY MASS SPECTROMETRY</scope>
</reference>
<reference key="14">
    <citation type="journal article" date="2009" name="Anal. Chem.">
        <title>Lys-N and trypsin cover complementary parts of the phosphoproteome in a refined SCX-based approach.</title>
        <authorList>
            <person name="Gauci S."/>
            <person name="Helbig A.O."/>
            <person name="Slijper M."/>
            <person name="Krijgsveld J."/>
            <person name="Heck A.J."/>
            <person name="Mohammed S."/>
        </authorList>
    </citation>
    <scope>ACETYLATION [LARGE SCALE ANALYSIS] AT MET-1 AND VAL-2</scope>
    <scope>CLEAVAGE OF INITIATOR METHIONINE [LARGE SCALE ANALYSIS]</scope>
    <scope>IDENTIFICATION BY MASS SPECTROMETRY [LARGE SCALE ANALYSIS]</scope>
</reference>
<reference key="15">
    <citation type="journal article" date="2011" name="BMC Syst. Biol.">
        <title>Initial characterization of the human central proteome.</title>
        <authorList>
            <person name="Burkard T.R."/>
            <person name="Planyavsky M."/>
            <person name="Kaupe I."/>
            <person name="Breitwieser F.P."/>
            <person name="Buerckstuemmer T."/>
            <person name="Bennett K.L."/>
            <person name="Superti-Furga G."/>
            <person name="Colinge J."/>
        </authorList>
    </citation>
    <scope>IDENTIFICATION BY MASS SPECTROMETRY [LARGE SCALE ANALYSIS]</scope>
</reference>
<reference key="16">
    <citation type="journal article" date="2012" name="Proc. Natl. Acad. Sci. U.S.A.">
        <title>N-terminal acetylome analyses and functional insights of the N-terminal acetyltransferase NatB.</title>
        <authorList>
            <person name="Van Damme P."/>
            <person name="Lasa M."/>
            <person name="Polevoda B."/>
            <person name="Gazquez C."/>
            <person name="Elosegui-Artola A."/>
            <person name="Kim D.S."/>
            <person name="De Juan-Pardo E."/>
            <person name="Demeyer K."/>
            <person name="Hole K."/>
            <person name="Larrea E."/>
            <person name="Timmerman E."/>
            <person name="Prieto J."/>
            <person name="Arnesen T."/>
            <person name="Sherman F."/>
            <person name="Gevaert K."/>
            <person name="Aldabe R."/>
        </authorList>
    </citation>
    <scope>ACETYLATION [LARGE SCALE ANALYSIS] AT MET-1</scope>
    <scope>IDENTIFICATION BY MASS SPECTROMETRY [LARGE SCALE ANALYSIS]</scope>
</reference>
<reference key="17">
    <citation type="journal article" date="2013" name="J. Proteome Res.">
        <title>Toward a comprehensive characterization of a human cancer cell phosphoproteome.</title>
        <authorList>
            <person name="Zhou H."/>
            <person name="Di Palma S."/>
            <person name="Preisinger C."/>
            <person name="Peng M."/>
            <person name="Polat A.N."/>
            <person name="Heck A.J."/>
            <person name="Mohammed S."/>
        </authorList>
    </citation>
    <scope>PHOSPHORYLATION [LARGE SCALE ANALYSIS] AT SER-12</scope>
    <scope>IDENTIFICATION BY MASS SPECTROMETRY [LARGE SCALE ANALYSIS]</scope>
    <source>
        <tissue>Erythroleukemia</tissue>
    </source>
</reference>
<reference key="18">
    <citation type="journal article" date="2014" name="J. Proteomics">
        <title>An enzyme assisted RP-RPLC approach for in-depth analysis of human liver phosphoproteome.</title>
        <authorList>
            <person name="Bian Y."/>
            <person name="Song C."/>
            <person name="Cheng K."/>
            <person name="Dong M."/>
            <person name="Wang F."/>
            <person name="Huang J."/>
            <person name="Sun D."/>
            <person name="Wang L."/>
            <person name="Ye M."/>
            <person name="Zou H."/>
        </authorList>
    </citation>
    <scope>IDENTIFICATION BY MASS SPECTROMETRY [LARGE SCALE ANALYSIS]</scope>
    <source>
        <tissue>Liver</tissue>
    </source>
</reference>
<reference key="19">
    <citation type="journal article" date="2015" name="Hum. Mol. Genet.">
        <title>Biochemical and cellular analysis of Ogden syndrome reveals downstream Nt-acetylation defects.</title>
        <authorList>
            <person name="Myklebust L.M."/>
            <person name="Van Damme P."/>
            <person name="Stoeve S.I."/>
            <person name="Doerfel M.J."/>
            <person name="Abboud A."/>
            <person name="Kalvik T.V."/>
            <person name="Grauffel C."/>
            <person name="Jonckheere V."/>
            <person name="Wu Y."/>
            <person name="Swensen J."/>
            <person name="Kaasa H."/>
            <person name="Liszczak G."/>
            <person name="Marmorstein R."/>
            <person name="Reuter N."/>
            <person name="Lyon G.J."/>
            <person name="Gevaert K."/>
            <person name="Arnesen T."/>
        </authorList>
    </citation>
    <scope>ACETYLATION AT VAL-2</scope>
    <scope>CLEAVAGE OF INITIATOR METHIONINE</scope>
</reference>
<reference key="20">
    <citation type="journal article" date="2005" name="EMBO J.">
        <title>Structures of the SUMO E1 provide mechanistic insights into SUMO activation and E2 recruitment to E1.</title>
        <authorList>
            <person name="Lois L.M."/>
            <person name="Lima C.D."/>
        </authorList>
    </citation>
    <scope>X-RAY CRYSTALLOGRAPHY (2.25 ANGSTROMS) IN COMPLEX WITH UBA2; SUMO1 AND ATP</scope>
    <scope>FUNCTION</scope>
</reference>
<reference key="21">
    <citation type="journal article" date="2010" name="Nature">
        <title>Active site remodelling accompanies thioester bond formation in the SUMO E1.</title>
        <authorList>
            <person name="Olsen S.K."/>
            <person name="Capili A.D."/>
            <person name="Lu X."/>
            <person name="Tan D.S."/>
            <person name="Lima C.D."/>
        </authorList>
    </citation>
    <scope>X-RAY CRYSTALLOGRAPHY (2.45 ANGSTROMS) IN COMPLEX WITH UBA2 AND SUMO1</scope>
    <scope>FUNCTION</scope>
    <scope>MUTAGENESIS OF ARG-21 AND 24-ARG--TRP-26</scope>
</reference>
<keyword id="KW-0002">3D-structure</keyword>
<keyword id="KW-0007">Acetylation</keyword>
<keyword id="KW-0025">Alternative splicing</keyword>
<keyword id="KW-0903">Direct protein sequencing</keyword>
<keyword id="KW-0436">Ligase</keyword>
<keyword id="KW-0539">Nucleus</keyword>
<keyword id="KW-0597">Phosphoprotein</keyword>
<keyword id="KW-1267">Proteomics identification</keyword>
<keyword id="KW-1185">Reference proteome</keyword>
<keyword id="KW-0833">Ubl conjugation pathway</keyword>
<protein>
    <recommendedName>
        <fullName>SUMO-activating enzyme subunit 1</fullName>
    </recommendedName>
    <alternativeName>
        <fullName>Ubiquitin-like 1-activating enzyme E1A</fullName>
    </alternativeName>
    <component>
        <recommendedName>
            <fullName>SUMO-activating enzyme subunit 1, N-terminally processed</fullName>
        </recommendedName>
    </component>
</protein>
<dbReference type="EMBL" id="AF090385">
    <property type="protein sequence ID" value="AAD12785.2"/>
    <property type="molecule type" value="mRNA"/>
</dbReference>
<dbReference type="EMBL" id="AF046025">
    <property type="protein sequence ID" value="AAD23902.2"/>
    <property type="molecule type" value="mRNA"/>
</dbReference>
<dbReference type="EMBL" id="AF110956">
    <property type="protein sequence ID" value="AAD24433.1"/>
    <property type="molecule type" value="mRNA"/>
</dbReference>
<dbReference type="EMBL" id="AF161489">
    <property type="protein sequence ID" value="AAF29104.1"/>
    <property type="molecule type" value="mRNA"/>
</dbReference>
<dbReference type="EMBL" id="AL560234">
    <property type="status" value="NOT_ANNOTATED_CDS"/>
    <property type="molecule type" value="mRNA"/>
</dbReference>
<dbReference type="EMBL" id="BT007290">
    <property type="protein sequence ID" value="AAP35954.1"/>
    <property type="molecule type" value="mRNA"/>
</dbReference>
<dbReference type="EMBL" id="AK021978">
    <property type="protein sequence ID" value="BAG51064.1"/>
    <property type="molecule type" value="mRNA"/>
</dbReference>
<dbReference type="EMBL" id="AK315624">
    <property type="protein sequence ID" value="BAG37992.1"/>
    <property type="molecule type" value="mRNA"/>
</dbReference>
<dbReference type="EMBL" id="AC008532">
    <property type="status" value="NOT_ANNOTATED_CDS"/>
    <property type="molecule type" value="Genomic_DNA"/>
</dbReference>
<dbReference type="EMBL" id="AC008755">
    <property type="status" value="NOT_ANNOTATED_CDS"/>
    <property type="molecule type" value="Genomic_DNA"/>
</dbReference>
<dbReference type="EMBL" id="CH471126">
    <property type="protein sequence ID" value="EAW57461.1"/>
    <property type="molecule type" value="Genomic_DNA"/>
</dbReference>
<dbReference type="EMBL" id="CH471126">
    <property type="protein sequence ID" value="EAW57463.1"/>
    <property type="molecule type" value="Genomic_DNA"/>
</dbReference>
<dbReference type="EMBL" id="BC000344">
    <property type="protein sequence ID" value="AAH00344.1"/>
    <property type="molecule type" value="mRNA"/>
</dbReference>
<dbReference type="EMBL" id="BC003611">
    <property type="protein sequence ID" value="AAH03611.1"/>
    <property type="molecule type" value="mRNA"/>
</dbReference>
<dbReference type="EMBL" id="BC018271">
    <property type="protein sequence ID" value="AAH18271.1"/>
    <property type="molecule type" value="mRNA"/>
</dbReference>
<dbReference type="CCDS" id="CCDS12696.1">
    <molecule id="Q9UBE0-1"/>
</dbReference>
<dbReference type="CCDS" id="CCDS54284.1">
    <molecule id="Q9UBE0-2"/>
</dbReference>
<dbReference type="CCDS" id="CCDS54285.1">
    <molecule id="Q9UBE0-3"/>
</dbReference>
<dbReference type="RefSeq" id="NP_001139185.1">
    <molecule id="Q9UBE0-3"/>
    <property type="nucleotide sequence ID" value="NM_001145713.2"/>
</dbReference>
<dbReference type="RefSeq" id="NP_001139186.1">
    <molecule id="Q9UBE0-2"/>
    <property type="nucleotide sequence ID" value="NM_001145714.2"/>
</dbReference>
<dbReference type="RefSeq" id="NP_005491.1">
    <molecule id="Q9UBE0-1"/>
    <property type="nucleotide sequence ID" value="NM_005500.3"/>
</dbReference>
<dbReference type="PDB" id="1Y8Q">
    <property type="method" value="X-ray"/>
    <property type="resolution" value="2.25 A"/>
    <property type="chains" value="A/C=1-346"/>
</dbReference>
<dbReference type="PDB" id="1Y8R">
    <property type="method" value="X-ray"/>
    <property type="resolution" value="2.75 A"/>
    <property type="chains" value="A/D=1-346"/>
</dbReference>
<dbReference type="PDB" id="3KYC">
    <property type="method" value="X-ray"/>
    <property type="resolution" value="2.45 A"/>
    <property type="chains" value="A=1-346"/>
</dbReference>
<dbReference type="PDB" id="3KYD">
    <property type="method" value="X-ray"/>
    <property type="resolution" value="2.61 A"/>
    <property type="chains" value="A=1-346"/>
</dbReference>
<dbReference type="PDB" id="6CWY">
    <property type="method" value="X-ray"/>
    <property type="resolution" value="2.46 A"/>
    <property type="chains" value="C=1-346"/>
</dbReference>
<dbReference type="PDB" id="6CWZ">
    <property type="method" value="X-ray"/>
    <property type="resolution" value="3.10 A"/>
    <property type="chains" value="C=1-346"/>
</dbReference>
<dbReference type="PDB" id="6XOG">
    <property type="method" value="X-ray"/>
    <property type="resolution" value="1.98 A"/>
    <property type="chains" value="A=1-346"/>
</dbReference>
<dbReference type="PDB" id="6XOH">
    <property type="method" value="X-ray"/>
    <property type="resolution" value="2.23 A"/>
    <property type="chains" value="A=1-346"/>
</dbReference>
<dbReference type="PDB" id="6XOI">
    <property type="method" value="X-ray"/>
    <property type="resolution" value="2.00 A"/>
    <property type="chains" value="A=1-346"/>
</dbReference>
<dbReference type="PDB" id="8VY5">
    <property type="method" value="X-ray"/>
    <property type="resolution" value="2.01 A"/>
    <property type="chains" value="A/B=9-346"/>
</dbReference>
<dbReference type="PDBsum" id="1Y8Q"/>
<dbReference type="PDBsum" id="1Y8R"/>
<dbReference type="PDBsum" id="3KYC"/>
<dbReference type="PDBsum" id="3KYD"/>
<dbReference type="PDBsum" id="6CWY"/>
<dbReference type="PDBsum" id="6CWZ"/>
<dbReference type="PDBsum" id="6XOG"/>
<dbReference type="PDBsum" id="6XOH"/>
<dbReference type="PDBsum" id="6XOI"/>
<dbReference type="PDBsum" id="8VY5"/>
<dbReference type="SMR" id="Q9UBE0"/>
<dbReference type="BioGRID" id="115366">
    <property type="interactions" value="146"/>
</dbReference>
<dbReference type="ComplexPortal" id="CPX-2161">
    <property type="entry name" value="SUMO activating enzyme complex, SAE1-UBA2"/>
</dbReference>
<dbReference type="CORUM" id="Q9UBE0"/>
<dbReference type="DIP" id="DIP-34587N"/>
<dbReference type="FunCoup" id="Q9UBE0">
    <property type="interactions" value="4808"/>
</dbReference>
<dbReference type="IntAct" id="Q9UBE0">
    <property type="interactions" value="57"/>
</dbReference>
<dbReference type="MINT" id="Q9UBE0"/>
<dbReference type="STRING" id="9606.ENSP00000270225"/>
<dbReference type="BindingDB" id="Q9UBE0"/>
<dbReference type="ChEMBL" id="CHEMBL1615388"/>
<dbReference type="DrugCentral" id="Q9UBE0"/>
<dbReference type="GlyGen" id="Q9UBE0">
    <property type="glycosylation" value="1 site, 1 O-linked glycan (1 site)"/>
</dbReference>
<dbReference type="iPTMnet" id="Q9UBE0"/>
<dbReference type="MetOSite" id="Q9UBE0"/>
<dbReference type="PhosphoSitePlus" id="Q9UBE0"/>
<dbReference type="SwissPalm" id="Q9UBE0"/>
<dbReference type="BioMuta" id="SAE1"/>
<dbReference type="DMDM" id="42559897"/>
<dbReference type="jPOST" id="Q9UBE0"/>
<dbReference type="MassIVE" id="Q9UBE0"/>
<dbReference type="PaxDb" id="9606-ENSP00000270225"/>
<dbReference type="PeptideAtlas" id="Q9UBE0"/>
<dbReference type="ProteomicsDB" id="24559"/>
<dbReference type="ProteomicsDB" id="33772"/>
<dbReference type="ProteomicsDB" id="83952">
    <molecule id="Q9UBE0-1"/>
</dbReference>
<dbReference type="Pumba" id="Q9UBE0"/>
<dbReference type="Antibodypedia" id="18168">
    <property type="antibodies" value="548 antibodies from 45 providers"/>
</dbReference>
<dbReference type="DNASU" id="10055"/>
<dbReference type="Ensembl" id="ENST00000270225.12">
    <molecule id="Q9UBE0-1"/>
    <property type="protein sequence ID" value="ENSP00000270225.6"/>
    <property type="gene ID" value="ENSG00000142230.13"/>
</dbReference>
<dbReference type="Ensembl" id="ENST00000392776.3">
    <molecule id="Q9UBE0-2"/>
    <property type="protein sequence ID" value="ENSP00000440818.1"/>
    <property type="gene ID" value="ENSG00000142230.13"/>
</dbReference>
<dbReference type="Ensembl" id="ENST00000413379.7">
    <molecule id="Q9UBE0-3"/>
    <property type="protein sequence ID" value="ENSP00000416557.2"/>
    <property type="gene ID" value="ENSG00000142230.13"/>
</dbReference>
<dbReference type="GeneID" id="10055"/>
<dbReference type="KEGG" id="hsa:10055"/>
<dbReference type="MANE-Select" id="ENST00000270225.12">
    <property type="protein sequence ID" value="ENSP00000270225.6"/>
    <property type="RefSeq nucleotide sequence ID" value="NM_005500.3"/>
    <property type="RefSeq protein sequence ID" value="NP_005491.1"/>
</dbReference>
<dbReference type="UCSC" id="uc002pgc.4">
    <molecule id="Q9UBE0-1"/>
    <property type="organism name" value="human"/>
</dbReference>
<dbReference type="AGR" id="HGNC:30660"/>
<dbReference type="CTD" id="10055"/>
<dbReference type="DisGeNET" id="10055"/>
<dbReference type="GeneCards" id="SAE1"/>
<dbReference type="HGNC" id="HGNC:30660">
    <property type="gene designation" value="SAE1"/>
</dbReference>
<dbReference type="HPA" id="ENSG00000142230">
    <property type="expression patterns" value="Low tissue specificity"/>
</dbReference>
<dbReference type="MIM" id="613294">
    <property type="type" value="gene"/>
</dbReference>
<dbReference type="neXtProt" id="NX_Q9UBE0"/>
<dbReference type="OpenTargets" id="ENSG00000142230"/>
<dbReference type="PharmGKB" id="PA162402387"/>
<dbReference type="VEuPathDB" id="HostDB:ENSG00000142230"/>
<dbReference type="eggNOG" id="KOG2014">
    <property type="taxonomic scope" value="Eukaryota"/>
</dbReference>
<dbReference type="GeneTree" id="ENSGT00550000075007"/>
<dbReference type="InParanoid" id="Q9UBE0"/>
<dbReference type="OMA" id="EFFGQFD"/>
<dbReference type="OrthoDB" id="412647at2759"/>
<dbReference type="PAN-GO" id="Q9UBE0">
    <property type="GO annotations" value="3 GO annotations based on evolutionary models"/>
</dbReference>
<dbReference type="PhylomeDB" id="Q9UBE0"/>
<dbReference type="TreeFam" id="TF315037"/>
<dbReference type="PathwayCommons" id="Q9UBE0"/>
<dbReference type="Reactome" id="R-HSA-3065676">
    <property type="pathway name" value="SUMO is conjugated to E1 (UBA2:SAE1)"/>
</dbReference>
<dbReference type="Reactome" id="R-HSA-3065678">
    <property type="pathway name" value="SUMO is transferred from E1 to E2 (UBE2I, UBC9)"/>
</dbReference>
<dbReference type="SignaLink" id="Q9UBE0"/>
<dbReference type="SIGNOR" id="Q9UBE0"/>
<dbReference type="UniPathway" id="UPA00886"/>
<dbReference type="BioGRID-ORCS" id="10055">
    <property type="hits" value="759 hits in 1182 CRISPR screens"/>
</dbReference>
<dbReference type="CD-CODE" id="DEE660B4">
    <property type="entry name" value="Stress granule"/>
</dbReference>
<dbReference type="ChiTaRS" id="SAE1">
    <property type="organism name" value="human"/>
</dbReference>
<dbReference type="EvolutionaryTrace" id="Q9UBE0"/>
<dbReference type="GeneWiki" id="SAE1"/>
<dbReference type="GenomeRNAi" id="10055"/>
<dbReference type="Pharos" id="Q9UBE0">
    <property type="development level" value="Tbio"/>
</dbReference>
<dbReference type="PRO" id="PR:Q9UBE0"/>
<dbReference type="Proteomes" id="UP000005640">
    <property type="component" value="Chromosome 19"/>
</dbReference>
<dbReference type="RNAct" id="Q9UBE0">
    <property type="molecule type" value="protein"/>
</dbReference>
<dbReference type="Bgee" id="ENSG00000142230">
    <property type="expression patterns" value="Expressed in ventricular zone and 211 other cell types or tissues"/>
</dbReference>
<dbReference type="ExpressionAtlas" id="Q9UBE0">
    <property type="expression patterns" value="baseline and differential"/>
</dbReference>
<dbReference type="GO" id="GO:0005737">
    <property type="term" value="C:cytoplasm"/>
    <property type="evidence" value="ECO:0000318"/>
    <property type="project" value="GO_Central"/>
</dbReference>
<dbReference type="GO" id="GO:0005654">
    <property type="term" value="C:nucleoplasm"/>
    <property type="evidence" value="ECO:0000314"/>
    <property type="project" value="HPA"/>
</dbReference>
<dbReference type="GO" id="GO:0005634">
    <property type="term" value="C:nucleus"/>
    <property type="evidence" value="ECO:0007005"/>
    <property type="project" value="UniProtKB"/>
</dbReference>
<dbReference type="GO" id="GO:0031510">
    <property type="term" value="C:SUMO activating enzyme complex"/>
    <property type="evidence" value="ECO:0000314"/>
    <property type="project" value="UniProtKB"/>
</dbReference>
<dbReference type="GO" id="GO:0043008">
    <property type="term" value="F:ATP-dependent protein binding"/>
    <property type="evidence" value="ECO:0000314"/>
    <property type="project" value="UniProtKB"/>
</dbReference>
<dbReference type="GO" id="GO:0008047">
    <property type="term" value="F:enzyme activator activity"/>
    <property type="evidence" value="ECO:0000304"/>
    <property type="project" value="ProtInc"/>
</dbReference>
<dbReference type="GO" id="GO:0046982">
    <property type="term" value="F:protein heterodimerization activity"/>
    <property type="evidence" value="ECO:0000353"/>
    <property type="project" value="UniProtKB"/>
</dbReference>
<dbReference type="GO" id="GO:0044388">
    <property type="term" value="F:small protein activating enzyme binding"/>
    <property type="evidence" value="ECO:0000353"/>
    <property type="project" value="CAFA"/>
</dbReference>
<dbReference type="GO" id="GO:0004839">
    <property type="term" value="F:ubiquitin activating enzyme activity"/>
    <property type="evidence" value="ECO:0000304"/>
    <property type="project" value="UniProtKB"/>
</dbReference>
<dbReference type="GO" id="GO:0033235">
    <property type="term" value="P:positive regulation of protein sumoylation"/>
    <property type="evidence" value="ECO:0000314"/>
    <property type="project" value="UniProtKB"/>
</dbReference>
<dbReference type="GO" id="GO:1903955">
    <property type="term" value="P:positive regulation of protein targeting to mitochondrion"/>
    <property type="evidence" value="ECO:0007001"/>
    <property type="project" value="ParkinsonsUK-UCL"/>
</dbReference>
<dbReference type="GO" id="GO:0016925">
    <property type="term" value="P:protein sumoylation"/>
    <property type="evidence" value="ECO:0000314"/>
    <property type="project" value="UniProtKB"/>
</dbReference>
<dbReference type="CDD" id="cd01492">
    <property type="entry name" value="Aos1_SUMO"/>
    <property type="match status" value="1"/>
</dbReference>
<dbReference type="DisProt" id="DP00485"/>
<dbReference type="FunFam" id="3.40.50.720:FF:000274">
    <property type="entry name" value="SUMO-activating enzyme subunit 1 isoform X1"/>
    <property type="match status" value="1"/>
</dbReference>
<dbReference type="Gene3D" id="3.40.50.720">
    <property type="entry name" value="NAD(P)-binding Rossmann-like Domain"/>
    <property type="match status" value="1"/>
</dbReference>
<dbReference type="IDEAL" id="IID00397"/>
<dbReference type="InterPro" id="IPR045886">
    <property type="entry name" value="ThiF/MoeB/HesA"/>
</dbReference>
<dbReference type="InterPro" id="IPR000594">
    <property type="entry name" value="ThiF_NAD_FAD-bd"/>
</dbReference>
<dbReference type="InterPro" id="IPR035985">
    <property type="entry name" value="Ubiquitin-activating_enz"/>
</dbReference>
<dbReference type="InterPro" id="IPR000011">
    <property type="entry name" value="UBQ/SUMO-activ_enz_E1-like"/>
</dbReference>
<dbReference type="PANTHER" id="PTHR10953:SF201">
    <property type="entry name" value="SUMO-ACTIVATING ENZYME SUBUNIT 1"/>
    <property type="match status" value="1"/>
</dbReference>
<dbReference type="PANTHER" id="PTHR10953">
    <property type="entry name" value="UBIQUITIN-ACTIVATING ENZYME E1"/>
    <property type="match status" value="1"/>
</dbReference>
<dbReference type="Pfam" id="PF00899">
    <property type="entry name" value="ThiF"/>
    <property type="match status" value="1"/>
</dbReference>
<dbReference type="PRINTS" id="PR01849">
    <property type="entry name" value="UBIQUITINACT"/>
</dbReference>
<dbReference type="SUPFAM" id="SSF69572">
    <property type="entry name" value="Activating enzymes of the ubiquitin-like proteins"/>
    <property type="match status" value="1"/>
</dbReference>
<comment type="function">
    <text evidence="2 3 4 5 6 7 9">The heterodimer acts as an E1 ligase for SUMO1, SUMO2, SUMO3, and probably SUMO4. It mediates ATP-dependent activation of SUMO proteins followed by formation of a thioester bond between a SUMO protein and a conserved active site cysteine residue on UBA2/SAE2.</text>
</comment>
<comment type="pathway">
    <text>Protein modification; protein sumoylation.</text>
</comment>
<comment type="subunit">
    <text evidence="6 7">Heterodimer of SAE1 and UBA2/SAE2. The heterodimer corresponds to the two domains that are encoded on a single polypeptide chain in ubiquitin-activating enzyme E1. Interacts with UBE2I.</text>
</comment>
<comment type="interaction">
    <interactant intactId="EBI-743154">
        <id>Q9UBE0</id>
    </interactant>
    <interactant intactId="EBI-748171">
        <id>O43186</id>
        <label>CRX</label>
    </interactant>
    <organismsDiffer>false</organismsDiffer>
    <experiments>3</experiments>
</comment>
<comment type="interaction">
    <interactant intactId="EBI-743154">
        <id>Q9UBE0</id>
    </interactant>
    <interactant intactId="EBI-16439278">
        <id>Q6FHY5</id>
        <label>MEOX2</label>
    </interactant>
    <organismsDiffer>false</organismsDiffer>
    <experiments>5</experiments>
</comment>
<comment type="interaction">
    <interactant intactId="EBI-743154">
        <id>Q9UBE0</id>
    </interactant>
    <interactant intactId="EBI-11956831">
        <id>Q13952-2</id>
        <label>NFYC</label>
    </interactant>
    <organismsDiffer>false</organismsDiffer>
    <experiments>3</experiments>
</comment>
<comment type="interaction">
    <interactant intactId="EBI-743154">
        <id>Q9UBE0</id>
    </interactant>
    <interactant intactId="EBI-296331">
        <id>Q02548</id>
        <label>PAX5</label>
    </interactant>
    <organismsDiffer>false</organismsDiffer>
    <experiments>3</experiments>
</comment>
<comment type="interaction">
    <interactant intactId="EBI-743154">
        <id>Q9UBE0</id>
    </interactant>
    <interactant intactId="EBI-747278">
        <id>P26367</id>
        <label>PAX6</label>
    </interactant>
    <organismsDiffer>false</organismsDiffer>
    <experiments>3</experiments>
</comment>
<comment type="interaction">
    <interactant intactId="EBI-743154">
        <id>Q9UBE0</id>
    </interactant>
    <interactant intactId="EBI-2683132">
        <id>Q06710</id>
        <label>PAX8</label>
    </interactant>
    <organismsDiffer>false</organismsDiffer>
    <experiments>3</experiments>
</comment>
<comment type="interaction">
    <interactant intactId="EBI-743154">
        <id>Q9UBE0</id>
    </interactant>
    <interactant intactId="EBI-718569">
        <id>Q9UBT2</id>
        <label>UBA2</label>
    </interactant>
    <organismsDiffer>false</organismsDiffer>
    <experiments>11</experiments>
</comment>
<comment type="subcellular location">
    <subcellularLocation>
        <location evidence="5">Nucleus</location>
    </subcellularLocation>
</comment>
<comment type="alternative products">
    <event type="alternative splicing"/>
    <isoform>
        <id>Q9UBE0-1</id>
        <name>1</name>
        <sequence type="displayed"/>
    </isoform>
    <isoform>
        <id>Q9UBE0-2</id>
        <name>2</name>
        <sequence type="described" ref="VSP_045373 VSP_045374"/>
    </isoform>
    <isoform>
        <id>Q9UBE0-3</id>
        <name>3</name>
        <sequence type="described" ref="VSP_045372 VSP_045375"/>
    </isoform>
</comment>
<comment type="tissue specificity">
    <text evidence="5">Expression level increases during S phase and drops in G2 phase (at protein level).</text>
</comment>
<comment type="similarity">
    <text evidence="12">Belongs to the ubiquitin-activating E1 family.</text>
</comment>
<gene>
    <name type="primary">SAE1</name>
    <name type="synonym">AOS1</name>
    <name type="synonym">SUA1</name>
    <name type="synonym">UBLE1A</name>
</gene>